<gene>
    <name evidence="1" type="primary">rpmD</name>
    <name type="ordered locus">ECH74115_4625</name>
</gene>
<feature type="chain" id="PRO_1000144676" description="Large ribosomal subunit protein uL30">
    <location>
        <begin position="1"/>
        <end position="59"/>
    </location>
</feature>
<protein>
    <recommendedName>
        <fullName evidence="1">Large ribosomal subunit protein uL30</fullName>
    </recommendedName>
    <alternativeName>
        <fullName evidence="2">50S ribosomal protein L30</fullName>
    </alternativeName>
</protein>
<evidence type="ECO:0000255" key="1">
    <source>
        <dbReference type="HAMAP-Rule" id="MF_01371"/>
    </source>
</evidence>
<evidence type="ECO:0000305" key="2"/>
<keyword id="KW-0687">Ribonucleoprotein</keyword>
<keyword id="KW-0689">Ribosomal protein</keyword>
<accession>B5YTM3</accession>
<name>RL30_ECO5E</name>
<comment type="subunit">
    <text evidence="1">Part of the 50S ribosomal subunit.</text>
</comment>
<comment type="similarity">
    <text evidence="1">Belongs to the universal ribosomal protein uL30 family.</text>
</comment>
<proteinExistence type="inferred from homology"/>
<organism>
    <name type="scientific">Escherichia coli O157:H7 (strain EC4115 / EHEC)</name>
    <dbReference type="NCBI Taxonomy" id="444450"/>
    <lineage>
        <taxon>Bacteria</taxon>
        <taxon>Pseudomonadati</taxon>
        <taxon>Pseudomonadota</taxon>
        <taxon>Gammaproteobacteria</taxon>
        <taxon>Enterobacterales</taxon>
        <taxon>Enterobacteriaceae</taxon>
        <taxon>Escherichia</taxon>
    </lineage>
</organism>
<dbReference type="EMBL" id="CP001164">
    <property type="protein sequence ID" value="ACI36240.1"/>
    <property type="molecule type" value="Genomic_DNA"/>
</dbReference>
<dbReference type="RefSeq" id="WP_001140433.1">
    <property type="nucleotide sequence ID" value="NC_011353.1"/>
</dbReference>
<dbReference type="SMR" id="B5YTM3"/>
<dbReference type="GeneID" id="93778685"/>
<dbReference type="KEGG" id="ecf:ECH74115_4625"/>
<dbReference type="HOGENOM" id="CLU_131047_1_4_6"/>
<dbReference type="GO" id="GO:0022625">
    <property type="term" value="C:cytosolic large ribosomal subunit"/>
    <property type="evidence" value="ECO:0007669"/>
    <property type="project" value="TreeGrafter"/>
</dbReference>
<dbReference type="GO" id="GO:0003735">
    <property type="term" value="F:structural constituent of ribosome"/>
    <property type="evidence" value="ECO:0007669"/>
    <property type="project" value="InterPro"/>
</dbReference>
<dbReference type="GO" id="GO:0006412">
    <property type="term" value="P:translation"/>
    <property type="evidence" value="ECO:0007669"/>
    <property type="project" value="UniProtKB-UniRule"/>
</dbReference>
<dbReference type="CDD" id="cd01658">
    <property type="entry name" value="Ribosomal_L30"/>
    <property type="match status" value="1"/>
</dbReference>
<dbReference type="FunFam" id="3.30.1390.20:FF:000001">
    <property type="entry name" value="50S ribosomal protein L30"/>
    <property type="match status" value="1"/>
</dbReference>
<dbReference type="Gene3D" id="3.30.1390.20">
    <property type="entry name" value="Ribosomal protein L30, ferredoxin-like fold domain"/>
    <property type="match status" value="1"/>
</dbReference>
<dbReference type="HAMAP" id="MF_01371_B">
    <property type="entry name" value="Ribosomal_uL30_B"/>
    <property type="match status" value="1"/>
</dbReference>
<dbReference type="InterPro" id="IPR036919">
    <property type="entry name" value="Ribo_uL30_ferredoxin-like_sf"/>
</dbReference>
<dbReference type="InterPro" id="IPR005996">
    <property type="entry name" value="Ribosomal_uL30_bac-type"/>
</dbReference>
<dbReference type="InterPro" id="IPR018038">
    <property type="entry name" value="Ribosomal_uL30_CS"/>
</dbReference>
<dbReference type="InterPro" id="IPR016082">
    <property type="entry name" value="Ribosomal_uL30_ferredoxin-like"/>
</dbReference>
<dbReference type="NCBIfam" id="TIGR01308">
    <property type="entry name" value="rpmD_bact"/>
    <property type="match status" value="1"/>
</dbReference>
<dbReference type="PANTHER" id="PTHR15892:SF2">
    <property type="entry name" value="LARGE RIBOSOMAL SUBUNIT PROTEIN UL30M"/>
    <property type="match status" value="1"/>
</dbReference>
<dbReference type="PANTHER" id="PTHR15892">
    <property type="entry name" value="MITOCHONDRIAL RIBOSOMAL PROTEIN L30"/>
    <property type="match status" value="1"/>
</dbReference>
<dbReference type="Pfam" id="PF00327">
    <property type="entry name" value="Ribosomal_L30"/>
    <property type="match status" value="1"/>
</dbReference>
<dbReference type="PIRSF" id="PIRSF002211">
    <property type="entry name" value="Ribosomal_L30_bac-type"/>
    <property type="match status" value="1"/>
</dbReference>
<dbReference type="SUPFAM" id="SSF55129">
    <property type="entry name" value="Ribosomal protein L30p/L7e"/>
    <property type="match status" value="1"/>
</dbReference>
<dbReference type="PROSITE" id="PS00634">
    <property type="entry name" value="RIBOSOMAL_L30"/>
    <property type="match status" value="1"/>
</dbReference>
<reference key="1">
    <citation type="journal article" date="2011" name="Proc. Natl. Acad. Sci. U.S.A.">
        <title>Genomic anatomy of Escherichia coli O157:H7 outbreaks.</title>
        <authorList>
            <person name="Eppinger M."/>
            <person name="Mammel M.K."/>
            <person name="Leclerc J.E."/>
            <person name="Ravel J."/>
            <person name="Cebula T.A."/>
        </authorList>
    </citation>
    <scope>NUCLEOTIDE SEQUENCE [LARGE SCALE GENOMIC DNA]</scope>
    <source>
        <strain>EC4115 / EHEC</strain>
    </source>
</reference>
<sequence>MAKTIKITQTRSAIGRLPKHKATLLGLGLRRIGHTVEREDTPAIRGMINAVSFMVKVEE</sequence>